<proteinExistence type="evidence at protein level"/>
<evidence type="ECO:0000256" key="1">
    <source>
        <dbReference type="SAM" id="MobiDB-lite"/>
    </source>
</evidence>
<evidence type="ECO:0000305" key="2"/>
<evidence type="ECO:0007829" key="3">
    <source>
        <dbReference type="PDB" id="1O9Y"/>
    </source>
</evidence>
<accession>O85094</accession>
<organism>
    <name type="scientific">Pseudomonas savastanoi pv. phaseolicola</name>
    <name type="common">Pseudomonas syringae pv. phaseolicola</name>
    <dbReference type="NCBI Taxonomy" id="319"/>
    <lineage>
        <taxon>Bacteria</taxon>
        <taxon>Pseudomonadati</taxon>
        <taxon>Pseudomonadota</taxon>
        <taxon>Gammaproteobacteria</taxon>
        <taxon>Pseudomonadales</taxon>
        <taxon>Pseudomonadaceae</taxon>
        <taxon>Pseudomonas</taxon>
    </lineage>
</organism>
<reference key="1">
    <citation type="submission" date="1998-01" db="EMBL/GenBank/DDBJ databases">
        <title>The hrpD locus of Pseudomonas syringae pv. phaseolicola encodes the five most broadly conserved proteins in the signal peptide independent (type III) protein export system common to plant and animal pathogenic bacteria.</title>
        <authorList>
            <person name="Frederick R.D."/>
            <person name="Panopoulos N.J."/>
        </authorList>
    </citation>
    <scope>NUCLEOTIDE SEQUENCE [GENOMIC DNA]</scope>
    <source>
        <strain>NPS 3121</strain>
    </source>
</reference>
<reference key="2">
    <citation type="journal article" date="2004" name="Mol. Plant Pathol.">
        <title>The PCR amplification and characterization of entire Pseudomonas syringae hrp/hrc clusters.</title>
        <authorList>
            <person name="Gropp S.J."/>
            <person name="Guttman D.S."/>
        </authorList>
        <dbReference type="AGRICOLA" id="IND43617657"/>
    </citation>
    <scope>NUCLEOTIDE SEQUENCE [GENOMIC DNA]</scope>
    <source>
        <strain>NPS 3121</strain>
    </source>
</reference>
<reference key="3">
    <citation type="journal article" date="2001" name="Acta Crystallogr. D">
        <title>Structural studies of the Hrp secretion system: expression, purification, crystallization and preliminary X-ray analysis of the C-terminal domain of the HrcQB protein from Pseudomonas syringae pv. phaseolicola.</title>
        <authorList>
            <person name="Fadouloglou V.E."/>
            <person name="Tampakaki A.P."/>
            <person name="Panopoulos N.J."/>
            <person name="Kokkinidis M."/>
        </authorList>
    </citation>
    <scope>X-RAY CRYSTALLOGRAPHY (3.0 ANGSTROMS) OF 50-128</scope>
</reference>
<reference key="4">
    <citation type="journal article" date="2004" name="Proc. Natl. Acad. Sci. U.S.A.">
        <title>Structure of HrcQb-C, a conserved component of the bacterial type III secretion systems.</title>
        <authorList>
            <person name="Fadouloglou V.E."/>
            <person name="Tampakaki A.P."/>
            <person name="Glykos N.M."/>
            <person name="Bastaki M.N."/>
            <person name="Hadden J.M."/>
            <person name="Phillips S.E."/>
            <person name="Panopoulos N.J."/>
            <person name="Kokkinidis M."/>
        </authorList>
    </citation>
    <scope>X-RAY CRYSTALLOGRAPHY (2.29 ANGSTROMS) OF 50-128</scope>
</reference>
<dbReference type="EMBL" id="AF043444">
    <property type="protein sequence ID" value="AAC25068.1"/>
    <property type="molecule type" value="Genomic_DNA"/>
</dbReference>
<dbReference type="EMBL" id="AY530203">
    <property type="protein sequence ID" value="AAS20443.1"/>
    <property type="molecule type" value="Genomic_DNA"/>
</dbReference>
<dbReference type="RefSeq" id="WP_004666088.1">
    <property type="nucleotide sequence ID" value="NZ_CP166925.2"/>
</dbReference>
<dbReference type="PDB" id="1O9Y">
    <property type="method" value="X-ray"/>
    <property type="resolution" value="2.29 A"/>
    <property type="chains" value="A/B/C/D=50-128"/>
</dbReference>
<dbReference type="PDBsum" id="1O9Y"/>
<dbReference type="SMR" id="O85094"/>
<dbReference type="OMA" id="YQEDVEM"/>
<dbReference type="EvolutionaryTrace" id="O85094"/>
<dbReference type="GO" id="GO:0009425">
    <property type="term" value="C:bacterial-type flagellum basal body"/>
    <property type="evidence" value="ECO:0007669"/>
    <property type="project" value="InterPro"/>
</dbReference>
<dbReference type="GO" id="GO:0005737">
    <property type="term" value="C:cytoplasm"/>
    <property type="evidence" value="ECO:0007669"/>
    <property type="project" value="UniProtKB-SubCell"/>
</dbReference>
<dbReference type="GO" id="GO:0003774">
    <property type="term" value="F:cytoskeletal motor activity"/>
    <property type="evidence" value="ECO:0007669"/>
    <property type="project" value="InterPro"/>
</dbReference>
<dbReference type="GO" id="GO:0071973">
    <property type="term" value="P:bacterial-type flagellum-dependent cell motility"/>
    <property type="evidence" value="ECO:0007669"/>
    <property type="project" value="InterPro"/>
</dbReference>
<dbReference type="GO" id="GO:0006935">
    <property type="term" value="P:chemotaxis"/>
    <property type="evidence" value="ECO:0007669"/>
    <property type="project" value="InterPro"/>
</dbReference>
<dbReference type="Gene3D" id="2.30.330.10">
    <property type="entry name" value="SpoA-like"/>
    <property type="match status" value="1"/>
</dbReference>
<dbReference type="InterPro" id="IPR001543">
    <property type="entry name" value="FliN-like_C"/>
</dbReference>
<dbReference type="InterPro" id="IPR001172">
    <property type="entry name" value="FliN_T3SS_HrcQb"/>
</dbReference>
<dbReference type="InterPro" id="IPR036429">
    <property type="entry name" value="SpoA-like_sf"/>
</dbReference>
<dbReference type="Pfam" id="PF01052">
    <property type="entry name" value="FliMN_C"/>
    <property type="match status" value="1"/>
</dbReference>
<dbReference type="PRINTS" id="PR00956">
    <property type="entry name" value="FLGMOTORFLIN"/>
</dbReference>
<dbReference type="SUPFAM" id="SSF101801">
    <property type="entry name" value="Surface presentation of antigens (SPOA)"/>
    <property type="match status" value="1"/>
</dbReference>
<sequence>MSTEDLYQEDVEMLDDYEDPSTEQHWSEEDGEPSGYATAEPDDHAAQEEQDEPPALDSLALDLTLRCGELRLTLAELRRLDAGTILEVTGISPGHATLCHGEQVVAEGELVDVEGRLGLQITRLVTRS</sequence>
<keyword id="KW-0002">3D-structure</keyword>
<keyword id="KW-0963">Cytoplasm</keyword>
<keyword id="KW-0843">Virulence</keyword>
<name>HRCQB_PSESH</name>
<feature type="chain" id="PRO_0000184134" description="Type III secretion protein HrcQb">
    <location>
        <begin position="1"/>
        <end position="128"/>
    </location>
</feature>
<feature type="region of interest" description="Disordered" evidence="1">
    <location>
        <begin position="1"/>
        <end position="57"/>
    </location>
</feature>
<feature type="region of interest" description="HrcQb-C">
    <location>
        <begin position="50"/>
        <end position="128"/>
    </location>
</feature>
<feature type="region of interest" description="Dimer-dimer interface">
    <location>
        <begin position="78"/>
        <end position="81"/>
    </location>
</feature>
<feature type="compositionally biased region" description="Acidic residues" evidence="1">
    <location>
        <begin position="1"/>
        <end position="21"/>
    </location>
</feature>
<feature type="site" description="Dimer-dimer interface">
    <location>
        <position position="87"/>
    </location>
</feature>
<feature type="site" description="Dimer-dimer interface">
    <location>
        <position position="112"/>
    </location>
</feature>
<feature type="site" description="Dimer-dimer interface">
    <location>
        <position position="114"/>
    </location>
</feature>
<feature type="site" description="Dimer-dimer interface">
    <location>
        <position position="120"/>
    </location>
</feature>
<feature type="strand" evidence="3">
    <location>
        <begin position="60"/>
        <end position="73"/>
    </location>
</feature>
<feature type="helix" evidence="3">
    <location>
        <begin position="74"/>
        <end position="78"/>
    </location>
</feature>
<feature type="strand" evidence="3">
    <location>
        <begin position="85"/>
        <end position="88"/>
    </location>
</feature>
<feature type="strand" evidence="3">
    <location>
        <begin position="95"/>
        <end position="100"/>
    </location>
</feature>
<feature type="strand" evidence="3">
    <location>
        <begin position="103"/>
        <end position="113"/>
    </location>
</feature>
<feature type="strand" evidence="3">
    <location>
        <begin position="116"/>
        <end position="124"/>
    </location>
</feature>
<gene>
    <name type="primary">hrcQb</name>
    <name type="synonym">hrcQ2</name>
    <name type="synonym">hrpU</name>
</gene>
<protein>
    <recommendedName>
        <fullName>Type III secretion protein HrcQb</fullName>
    </recommendedName>
</protein>
<comment type="function">
    <text>Component of the type III secretion system, which is required for effector protein delivery, parasitism, and pathogenicity. Probably participates in the formation of a C-ring-like assembly along with HrcQa.</text>
</comment>
<comment type="subunit">
    <text>Homotetramer. The four monomers assemble into two tightly bound homodimers. Interacts with HrcQa.</text>
</comment>
<comment type="subcellular location">
    <subcellularLocation>
        <location>Cytoplasm</location>
    </subcellularLocation>
    <text>Or loosely associated with a membrane component, probably HrcQa.</text>
</comment>
<comment type="domain">
    <text>The HrcQb-C domain interacts with the HrcQa C-terminal domain.</text>
</comment>
<comment type="similarity">
    <text evidence="2">Belongs to the FliN/MopA/SpaO family.</text>
</comment>